<feature type="chain" id="PRO_0000431500" description="Probable alkaline/neutral invertase D">
    <location>
        <begin position="1"/>
        <end position="534"/>
    </location>
</feature>
<feature type="modified residue" description="Phosphoserine" evidence="2">
    <location>
        <position position="7"/>
    </location>
</feature>
<feature type="modified residue" description="Phosphoserine" evidence="2">
    <location>
        <position position="37"/>
    </location>
</feature>
<feature type="modified residue" description="Phosphothreonine" evidence="2">
    <location>
        <position position="55"/>
    </location>
</feature>
<feature type="modified residue" description="Phosphoserine" evidence="2">
    <location>
        <position position="532"/>
    </location>
</feature>
<feature type="sequence conflict" description="In Ref. 3; AAM65926." evidence="4" ref="3">
    <original>E</original>
    <variation>A</variation>
    <location>
        <position position="400"/>
    </location>
</feature>
<sequence>MEGVNSSSSISDLDELARLLDRPRVNIERKRSFDERSFSEMGIFDNVNSPGGWETPVSSARNSFEPHPMVAEAWDALRRSLVYFRGQPVGTIAAYDHATEEVLNYDQVFVRDFVPSALAFLMNGEPDIVKNFLLKTIQIQGREKRIDRFKLGEGAMPASFKVIHDPIKETDSINADFGESAIGRVAPVDSGFWWIILLRAYTKSTGDTSLAETSECQKGMRLILSLCLSEGFDTFPTLLCADGCSMIDRRMGVYGYPIEIQALFFMALRSAMSMLKHDAEGKEFMERIVKRLHALSFHMRSYFWLDFQQLNDIYRYKTEEYSHTAVNKFNVIPDSIPEWVFDFMPLRGGYFIGNVSPARMDFRWFALGNCVAILASLATPEQSASIMDLIEERWEELVGEMPVKICHPAIESHEWRIVTGCDPKNTRWSYHNGGSWPVLLWLLTAACIKTGRPQIARRAIDLAEARLLKDGWPEYYDGKSGRFIGKQARKFQTWSIAGYLVAKMLLEDPSHLGMISLEEDKQTKPVIKRSYSWT</sequence>
<dbReference type="EC" id="3.2.1.26" evidence="1"/>
<dbReference type="EMBL" id="AC003979">
    <property type="protein sequence ID" value="AAC25521.1"/>
    <property type="status" value="ALT_SEQ"/>
    <property type="molecule type" value="Genomic_DNA"/>
</dbReference>
<dbReference type="EMBL" id="CP002684">
    <property type="protein sequence ID" value="AEE30264.1"/>
    <property type="molecule type" value="Genomic_DNA"/>
</dbReference>
<dbReference type="EMBL" id="AY088388">
    <property type="protein sequence ID" value="AAM65926.1"/>
    <property type="molecule type" value="mRNA"/>
</dbReference>
<dbReference type="PIR" id="T00779">
    <property type="entry name" value="T00779"/>
</dbReference>
<dbReference type="SMR" id="F4I2X9"/>
<dbReference type="STRING" id="3702.F4I2X9"/>
<dbReference type="CAZy" id="GH100">
    <property type="family name" value="Glycoside Hydrolase Family 100"/>
</dbReference>
<dbReference type="PaxDb" id="3702-AT1G22650.1"/>
<dbReference type="ProteomicsDB" id="248512"/>
<dbReference type="EnsemblPlants" id="AT1G22650.1">
    <property type="protein sequence ID" value="AT1G22650.1"/>
    <property type="gene ID" value="AT1G22650"/>
</dbReference>
<dbReference type="GeneID" id="838871"/>
<dbReference type="Gramene" id="AT1G22650.1">
    <property type="protein sequence ID" value="AT1G22650.1"/>
    <property type="gene ID" value="AT1G22650"/>
</dbReference>
<dbReference type="KEGG" id="ath:AT1G22650"/>
<dbReference type="Araport" id="AT1G22650"/>
<dbReference type="TAIR" id="AT1G22650">
    <property type="gene designation" value="A/N-INVD"/>
</dbReference>
<dbReference type="eggNOG" id="ENOG502QPS0">
    <property type="taxonomic scope" value="Eukaryota"/>
</dbReference>
<dbReference type="HOGENOM" id="CLU_020846_1_1_1"/>
<dbReference type="InParanoid" id="F4I2X9"/>
<dbReference type="OMA" id="MDVWGAP"/>
<dbReference type="OrthoDB" id="585877at2759"/>
<dbReference type="PRO" id="PR:F4I2X9"/>
<dbReference type="Proteomes" id="UP000006548">
    <property type="component" value="Chromosome 1"/>
</dbReference>
<dbReference type="ExpressionAtlas" id="F4I2X9">
    <property type="expression patterns" value="baseline and differential"/>
</dbReference>
<dbReference type="GO" id="GO:0004564">
    <property type="term" value="F:beta-fructofuranosidase activity"/>
    <property type="evidence" value="ECO:0007669"/>
    <property type="project" value="UniProtKB-EC"/>
</dbReference>
<dbReference type="GO" id="GO:0033926">
    <property type="term" value="F:endo-alpha-N-acetylgalactosaminidase activity"/>
    <property type="evidence" value="ECO:0007669"/>
    <property type="project" value="InterPro"/>
</dbReference>
<dbReference type="GO" id="GO:0005975">
    <property type="term" value="P:carbohydrate metabolic process"/>
    <property type="evidence" value="ECO:0007669"/>
    <property type="project" value="InterPro"/>
</dbReference>
<dbReference type="FunFam" id="1.50.10.10:FF:000001">
    <property type="entry name" value="probable alkaline/neutral invertase B"/>
    <property type="match status" value="1"/>
</dbReference>
<dbReference type="Gene3D" id="1.50.10.10">
    <property type="match status" value="1"/>
</dbReference>
<dbReference type="InterPro" id="IPR008928">
    <property type="entry name" value="6-hairpin_glycosidase_sf"/>
</dbReference>
<dbReference type="InterPro" id="IPR012341">
    <property type="entry name" value="6hp_glycosidase-like_sf"/>
</dbReference>
<dbReference type="InterPro" id="IPR024746">
    <property type="entry name" value="Glyco_hydro_100"/>
</dbReference>
<dbReference type="PANTHER" id="PTHR31916">
    <property type="match status" value="1"/>
</dbReference>
<dbReference type="PANTHER" id="PTHR31916:SF15">
    <property type="entry name" value="ALKALINE_NEUTRAL INVERTASE D-RELATED"/>
    <property type="match status" value="1"/>
</dbReference>
<dbReference type="Pfam" id="PF12899">
    <property type="entry name" value="Glyco_hydro_100"/>
    <property type="match status" value="1"/>
</dbReference>
<dbReference type="SUPFAM" id="SSF48208">
    <property type="entry name" value="Six-hairpin glycosidases"/>
    <property type="match status" value="1"/>
</dbReference>
<organism>
    <name type="scientific">Arabidopsis thaliana</name>
    <name type="common">Mouse-ear cress</name>
    <dbReference type="NCBI Taxonomy" id="3702"/>
    <lineage>
        <taxon>Eukaryota</taxon>
        <taxon>Viridiplantae</taxon>
        <taxon>Streptophyta</taxon>
        <taxon>Embryophyta</taxon>
        <taxon>Tracheophyta</taxon>
        <taxon>Spermatophyta</taxon>
        <taxon>Magnoliopsida</taxon>
        <taxon>eudicotyledons</taxon>
        <taxon>Gunneridae</taxon>
        <taxon>Pentapetalae</taxon>
        <taxon>rosids</taxon>
        <taxon>malvids</taxon>
        <taxon>Brassicales</taxon>
        <taxon>Brassicaceae</taxon>
        <taxon>Camelineae</taxon>
        <taxon>Arabidopsis</taxon>
    </lineage>
</organism>
<evidence type="ECO:0000250" key="1">
    <source>
        <dbReference type="UniProtKB" id="Q9FXA8"/>
    </source>
</evidence>
<evidence type="ECO:0000250" key="2">
    <source>
        <dbReference type="UniProtKB" id="Q9LQF2"/>
    </source>
</evidence>
<evidence type="ECO:0000303" key="3">
    <source>
    </source>
</evidence>
<evidence type="ECO:0000305" key="4"/>
<evidence type="ECO:0000312" key="5">
    <source>
        <dbReference type="Araport" id="AT1G22650"/>
    </source>
</evidence>
<evidence type="ECO:0000312" key="6">
    <source>
        <dbReference type="EMBL" id="AAC25521.1"/>
    </source>
</evidence>
<name>INVD_ARATH</name>
<reference key="1">
    <citation type="journal article" date="2000" name="Nature">
        <title>Sequence and analysis of chromosome 1 of the plant Arabidopsis thaliana.</title>
        <authorList>
            <person name="Theologis A."/>
            <person name="Ecker J.R."/>
            <person name="Palm C.J."/>
            <person name="Federspiel N.A."/>
            <person name="Kaul S."/>
            <person name="White O."/>
            <person name="Alonso J."/>
            <person name="Altafi H."/>
            <person name="Araujo R."/>
            <person name="Bowman C.L."/>
            <person name="Brooks S.Y."/>
            <person name="Buehler E."/>
            <person name="Chan A."/>
            <person name="Chao Q."/>
            <person name="Chen H."/>
            <person name="Cheuk R.F."/>
            <person name="Chin C.W."/>
            <person name="Chung M.K."/>
            <person name="Conn L."/>
            <person name="Conway A.B."/>
            <person name="Conway A.R."/>
            <person name="Creasy T.H."/>
            <person name="Dewar K."/>
            <person name="Dunn P."/>
            <person name="Etgu P."/>
            <person name="Feldblyum T.V."/>
            <person name="Feng J.-D."/>
            <person name="Fong B."/>
            <person name="Fujii C.Y."/>
            <person name="Gill J.E."/>
            <person name="Goldsmith A.D."/>
            <person name="Haas B."/>
            <person name="Hansen N.F."/>
            <person name="Hughes B."/>
            <person name="Huizar L."/>
            <person name="Hunter J.L."/>
            <person name="Jenkins J."/>
            <person name="Johnson-Hopson C."/>
            <person name="Khan S."/>
            <person name="Khaykin E."/>
            <person name="Kim C.J."/>
            <person name="Koo H.L."/>
            <person name="Kremenetskaia I."/>
            <person name="Kurtz D.B."/>
            <person name="Kwan A."/>
            <person name="Lam B."/>
            <person name="Langin-Hooper S."/>
            <person name="Lee A."/>
            <person name="Lee J.M."/>
            <person name="Lenz C.A."/>
            <person name="Li J.H."/>
            <person name="Li Y.-P."/>
            <person name="Lin X."/>
            <person name="Liu S.X."/>
            <person name="Liu Z.A."/>
            <person name="Luros J.S."/>
            <person name="Maiti R."/>
            <person name="Marziali A."/>
            <person name="Militscher J."/>
            <person name="Miranda M."/>
            <person name="Nguyen M."/>
            <person name="Nierman W.C."/>
            <person name="Osborne B.I."/>
            <person name="Pai G."/>
            <person name="Peterson J."/>
            <person name="Pham P.K."/>
            <person name="Rizzo M."/>
            <person name="Rooney T."/>
            <person name="Rowley D."/>
            <person name="Sakano H."/>
            <person name="Salzberg S.L."/>
            <person name="Schwartz J.R."/>
            <person name="Shinn P."/>
            <person name="Southwick A.M."/>
            <person name="Sun H."/>
            <person name="Tallon L.J."/>
            <person name="Tambunga G."/>
            <person name="Toriumi M.J."/>
            <person name="Town C.D."/>
            <person name="Utterback T."/>
            <person name="Van Aken S."/>
            <person name="Vaysberg M."/>
            <person name="Vysotskaia V.S."/>
            <person name="Walker M."/>
            <person name="Wu D."/>
            <person name="Yu G."/>
            <person name="Fraser C.M."/>
            <person name="Venter J.C."/>
            <person name="Davis R.W."/>
        </authorList>
    </citation>
    <scope>NUCLEOTIDE SEQUENCE [LARGE SCALE GENOMIC DNA]</scope>
    <source>
        <strain>cv. Columbia</strain>
    </source>
</reference>
<reference key="2">
    <citation type="journal article" date="2017" name="Plant J.">
        <title>Araport11: a complete reannotation of the Arabidopsis thaliana reference genome.</title>
        <authorList>
            <person name="Cheng C.Y."/>
            <person name="Krishnakumar V."/>
            <person name="Chan A.P."/>
            <person name="Thibaud-Nissen F."/>
            <person name="Schobel S."/>
            <person name="Town C.D."/>
        </authorList>
    </citation>
    <scope>GENOME REANNOTATION</scope>
    <source>
        <strain>cv. Columbia</strain>
    </source>
</reference>
<reference key="3">
    <citation type="submission" date="2002-03" db="EMBL/GenBank/DDBJ databases">
        <title>Full-length cDNA from Arabidopsis thaliana.</title>
        <authorList>
            <person name="Brover V.V."/>
            <person name="Troukhan M.E."/>
            <person name="Alexandrov N.A."/>
            <person name="Lu Y.-P."/>
            <person name="Flavell R.B."/>
            <person name="Feldmann K.A."/>
        </authorList>
    </citation>
    <scope>NUCLEOTIDE SEQUENCE [LARGE SCALE MRNA]</scope>
</reference>
<reference key="4">
    <citation type="journal article" date="2011" name="J. Exp. Bot.">
        <title>Exploring the neutral invertase-oxidative stress defence connection in Arabidopsis thaliana.</title>
        <authorList>
            <person name="Xiang L."/>
            <person name="Le Roy K."/>
            <person name="Bolouri-Moghaddam M.R."/>
            <person name="Vanhaecke M."/>
            <person name="Lammens W."/>
            <person name="Rolland F."/>
            <person name="Van den Ende W."/>
        </authorList>
    </citation>
    <scope>GENE FAMILY</scope>
</reference>
<accession>F4I2X9</accession>
<accession>O80556</accession>
<accession>Q8L9K0</accession>
<keyword id="KW-0119">Carbohydrate metabolism</keyword>
<keyword id="KW-0326">Glycosidase</keyword>
<keyword id="KW-0378">Hydrolase</keyword>
<keyword id="KW-0597">Phosphoprotein</keyword>
<keyword id="KW-1185">Reference proteome</keyword>
<gene>
    <name evidence="3" type="primary">INVD</name>
    <name evidence="5" type="ordered locus">At1g22650</name>
    <name evidence="6" type="ORF">T22J18.18</name>
</gene>
<protein>
    <recommendedName>
        <fullName evidence="4">Probable alkaline/neutral invertase D</fullName>
        <shortName evidence="3">A/N-INVD</shortName>
        <ecNumber evidence="1">3.2.1.26</ecNumber>
    </recommendedName>
</protein>
<proteinExistence type="evidence at transcript level"/>
<comment type="function">
    <text evidence="2">Invertase that cleaves sucrose into glucose and fructose.</text>
</comment>
<comment type="catalytic activity">
    <reaction evidence="1">
        <text>Hydrolysis of terminal non-reducing beta-D-fructofuranoside residues in beta-D-fructofuranosides.</text>
        <dbReference type="EC" id="3.2.1.26"/>
    </reaction>
</comment>
<comment type="similarity">
    <text evidence="4">Belongs to the glycosyl hydrolase 100 family.</text>
</comment>
<comment type="sequence caution" evidence="4">
    <conflict type="erroneous gene model prediction">
        <sequence resource="EMBL-CDS" id="AAC25521"/>
    </conflict>
</comment>